<evidence type="ECO:0000255" key="1">
    <source>
        <dbReference type="HAMAP-Rule" id="MF_01520"/>
    </source>
</evidence>
<dbReference type="EC" id="2.7.7.60" evidence="1"/>
<dbReference type="EC" id="4.6.1.12" evidence="1"/>
<dbReference type="EMBL" id="AM260522">
    <property type="protein sequence ID" value="CAJ99885.1"/>
    <property type="molecule type" value="Genomic_DNA"/>
</dbReference>
<dbReference type="RefSeq" id="WP_011577992.1">
    <property type="nucleotide sequence ID" value="NC_008229.1"/>
</dbReference>
<dbReference type="SMR" id="Q17WU1"/>
<dbReference type="STRING" id="382638.Hac_1124"/>
<dbReference type="GeneID" id="31758479"/>
<dbReference type="KEGG" id="hac:Hac_1124"/>
<dbReference type="eggNOG" id="COG0245">
    <property type="taxonomic scope" value="Bacteria"/>
</dbReference>
<dbReference type="eggNOG" id="COG1211">
    <property type="taxonomic scope" value="Bacteria"/>
</dbReference>
<dbReference type="HOGENOM" id="CLU_042800_2_6_7"/>
<dbReference type="OrthoDB" id="9804336at2"/>
<dbReference type="BioCyc" id="HACI382638:HAC_RS04830-MONOMER"/>
<dbReference type="UniPathway" id="UPA00056">
    <property type="reaction ID" value="UER00093"/>
</dbReference>
<dbReference type="UniPathway" id="UPA00056">
    <property type="reaction ID" value="UER00095"/>
</dbReference>
<dbReference type="Proteomes" id="UP000000775">
    <property type="component" value="Chromosome"/>
</dbReference>
<dbReference type="GO" id="GO:0008685">
    <property type="term" value="F:2-C-methyl-D-erythritol 2,4-cyclodiphosphate synthase activity"/>
    <property type="evidence" value="ECO:0007669"/>
    <property type="project" value="UniProtKB-UniRule"/>
</dbReference>
<dbReference type="GO" id="GO:0050518">
    <property type="term" value="F:2-C-methyl-D-erythritol 4-phosphate cytidylyltransferase activity"/>
    <property type="evidence" value="ECO:0007669"/>
    <property type="project" value="UniProtKB-UniRule"/>
</dbReference>
<dbReference type="GO" id="GO:0046872">
    <property type="term" value="F:metal ion binding"/>
    <property type="evidence" value="ECO:0007669"/>
    <property type="project" value="UniProtKB-KW"/>
</dbReference>
<dbReference type="GO" id="GO:0019288">
    <property type="term" value="P:isopentenyl diphosphate biosynthetic process, methylerythritol 4-phosphate pathway"/>
    <property type="evidence" value="ECO:0007669"/>
    <property type="project" value="UniProtKB-UniRule"/>
</dbReference>
<dbReference type="GO" id="GO:0016114">
    <property type="term" value="P:terpenoid biosynthetic process"/>
    <property type="evidence" value="ECO:0007669"/>
    <property type="project" value="InterPro"/>
</dbReference>
<dbReference type="CDD" id="cd02516">
    <property type="entry name" value="CDP-ME_synthetase"/>
    <property type="match status" value="1"/>
</dbReference>
<dbReference type="CDD" id="cd00554">
    <property type="entry name" value="MECDP_synthase"/>
    <property type="match status" value="1"/>
</dbReference>
<dbReference type="FunFam" id="3.30.1330.50:FF:000005">
    <property type="entry name" value="Bifunctional enzyme IspD/IspF"/>
    <property type="match status" value="1"/>
</dbReference>
<dbReference type="Gene3D" id="3.30.1330.50">
    <property type="entry name" value="2-C-methyl-D-erythritol 2,4-cyclodiphosphate synthase"/>
    <property type="match status" value="1"/>
</dbReference>
<dbReference type="Gene3D" id="3.90.550.10">
    <property type="entry name" value="Spore Coat Polysaccharide Biosynthesis Protein SpsA, Chain A"/>
    <property type="match status" value="1"/>
</dbReference>
<dbReference type="HAMAP" id="MF_01520">
    <property type="entry name" value="IspDF"/>
    <property type="match status" value="1"/>
</dbReference>
<dbReference type="HAMAP" id="MF_00107">
    <property type="entry name" value="IspF"/>
    <property type="match status" value="1"/>
</dbReference>
<dbReference type="InterPro" id="IPR026596">
    <property type="entry name" value="IspD/F"/>
</dbReference>
<dbReference type="InterPro" id="IPR034683">
    <property type="entry name" value="IspD/TarI"/>
</dbReference>
<dbReference type="InterPro" id="IPR018294">
    <property type="entry name" value="ISPD_synthase_CS"/>
</dbReference>
<dbReference type="InterPro" id="IPR003526">
    <property type="entry name" value="MECDP_synthase"/>
</dbReference>
<dbReference type="InterPro" id="IPR020555">
    <property type="entry name" value="MECDP_synthase_CS"/>
</dbReference>
<dbReference type="InterPro" id="IPR036571">
    <property type="entry name" value="MECDP_synthase_sf"/>
</dbReference>
<dbReference type="InterPro" id="IPR029044">
    <property type="entry name" value="Nucleotide-diphossugar_trans"/>
</dbReference>
<dbReference type="NCBIfam" id="TIGR00151">
    <property type="entry name" value="ispF"/>
    <property type="match status" value="1"/>
</dbReference>
<dbReference type="NCBIfam" id="NF006899">
    <property type="entry name" value="PRK09382.1"/>
    <property type="match status" value="1"/>
</dbReference>
<dbReference type="PANTHER" id="PTHR43181">
    <property type="entry name" value="2-C-METHYL-D-ERYTHRITOL 2,4-CYCLODIPHOSPHATE SYNTHASE, CHLOROPLASTIC"/>
    <property type="match status" value="1"/>
</dbReference>
<dbReference type="PANTHER" id="PTHR43181:SF1">
    <property type="entry name" value="2-C-METHYL-D-ERYTHRITOL 2,4-CYCLODIPHOSPHATE SYNTHASE, CHLOROPLASTIC"/>
    <property type="match status" value="1"/>
</dbReference>
<dbReference type="Pfam" id="PF01128">
    <property type="entry name" value="IspD"/>
    <property type="match status" value="1"/>
</dbReference>
<dbReference type="Pfam" id="PF02542">
    <property type="entry name" value="YgbB"/>
    <property type="match status" value="1"/>
</dbReference>
<dbReference type="SUPFAM" id="SSF69765">
    <property type="entry name" value="IpsF-like"/>
    <property type="match status" value="1"/>
</dbReference>
<dbReference type="SUPFAM" id="SSF53448">
    <property type="entry name" value="Nucleotide-diphospho-sugar transferases"/>
    <property type="match status" value="1"/>
</dbReference>
<dbReference type="PROSITE" id="PS01295">
    <property type="entry name" value="ISPD"/>
    <property type="match status" value="1"/>
</dbReference>
<dbReference type="PROSITE" id="PS01350">
    <property type="entry name" value="ISPF"/>
    <property type="match status" value="1"/>
</dbReference>
<reference key="1">
    <citation type="journal article" date="2006" name="PLoS Genet.">
        <title>Who ate whom? Adaptive Helicobacter genomic changes that accompanied a host jump from early humans to large felines.</title>
        <authorList>
            <person name="Eppinger M."/>
            <person name="Baar C."/>
            <person name="Linz B."/>
            <person name="Raddatz G."/>
            <person name="Lanz C."/>
            <person name="Keller H."/>
            <person name="Morelli G."/>
            <person name="Gressmann H."/>
            <person name="Achtman M."/>
            <person name="Schuster S.C."/>
        </authorList>
    </citation>
    <scope>NUCLEOTIDE SEQUENCE [LARGE SCALE GENOMIC DNA]</scope>
    <source>
        <strain>Sheeba</strain>
    </source>
</reference>
<organism>
    <name type="scientific">Helicobacter acinonychis (strain Sheeba)</name>
    <dbReference type="NCBI Taxonomy" id="382638"/>
    <lineage>
        <taxon>Bacteria</taxon>
        <taxon>Pseudomonadati</taxon>
        <taxon>Campylobacterota</taxon>
        <taxon>Epsilonproteobacteria</taxon>
        <taxon>Campylobacterales</taxon>
        <taxon>Helicobacteraceae</taxon>
        <taxon>Helicobacter</taxon>
    </lineage>
</organism>
<protein>
    <recommendedName>
        <fullName evidence="1">Bifunctional enzyme IspD/IspF</fullName>
    </recommendedName>
    <domain>
        <recommendedName>
            <fullName evidence="1">2-C-methyl-D-erythritol 4-phosphate cytidylyltransferase</fullName>
            <ecNumber evidence="1">2.7.7.60</ecNumber>
        </recommendedName>
        <alternativeName>
            <fullName evidence="1">4-diphosphocytidyl-2C-methyl-D-erythritol synthase</fullName>
        </alternativeName>
        <alternativeName>
            <fullName evidence="1">MEP cytidylyltransferase</fullName>
            <shortName evidence="1">MCT</shortName>
        </alternativeName>
    </domain>
    <domain>
        <recommendedName>
            <fullName evidence="1">2-C-methyl-D-erythritol 2,4-cyclodiphosphate synthase</fullName>
            <shortName evidence="1">MECDP-synthase</shortName>
            <shortName evidence="1">MECPP-synthase</shortName>
            <shortName evidence="1">MECPS</shortName>
            <ecNumber evidence="1">4.6.1.12</ecNumber>
        </recommendedName>
    </domain>
</protein>
<keyword id="KW-0414">Isoprene biosynthesis</keyword>
<keyword id="KW-0456">Lyase</keyword>
<keyword id="KW-0479">Metal-binding</keyword>
<keyword id="KW-0511">Multifunctional enzyme</keyword>
<keyword id="KW-0548">Nucleotidyltransferase</keyword>
<keyword id="KW-0808">Transferase</keyword>
<feature type="chain" id="PRO_0000296746" description="Bifunctional enzyme IspD/IspF">
    <location>
        <begin position="1"/>
        <end position="406"/>
    </location>
</feature>
<feature type="region of interest" description="2-C-methyl-D-erythritol 4-phosphate cytidylyltransferase" evidence="1">
    <location>
        <begin position="1"/>
        <end position="247"/>
    </location>
</feature>
<feature type="region of interest" description="2-C-methyl-D-erythritol 2,4-cyclodiphosphate synthase" evidence="1">
    <location>
        <begin position="248"/>
        <end position="406"/>
    </location>
</feature>
<feature type="binding site" evidence="1">
    <location>
        <begin position="254"/>
        <end position="256"/>
    </location>
    <ligand>
        <name>4-CDP-2-C-methyl-D-erythritol 2-phosphate</name>
        <dbReference type="ChEBI" id="CHEBI:57919"/>
    </ligand>
</feature>
<feature type="binding site" evidence="1">
    <location>
        <position position="254"/>
    </location>
    <ligand>
        <name>a divalent metal cation</name>
        <dbReference type="ChEBI" id="CHEBI:60240"/>
    </ligand>
</feature>
<feature type="binding site" evidence="1">
    <location>
        <position position="256"/>
    </location>
    <ligand>
        <name>a divalent metal cation</name>
        <dbReference type="ChEBI" id="CHEBI:60240"/>
    </ligand>
</feature>
<feature type="binding site" evidence="1">
    <location>
        <begin position="280"/>
        <end position="281"/>
    </location>
    <ligand>
        <name>4-CDP-2-C-methyl-D-erythritol 2-phosphate</name>
        <dbReference type="ChEBI" id="CHEBI:57919"/>
    </ligand>
</feature>
<feature type="binding site" evidence="1">
    <location>
        <position position="288"/>
    </location>
    <ligand>
        <name>a divalent metal cation</name>
        <dbReference type="ChEBI" id="CHEBI:60240"/>
    </ligand>
</feature>
<feature type="binding site" evidence="1">
    <location>
        <begin position="302"/>
        <end position="304"/>
    </location>
    <ligand>
        <name>4-CDP-2-C-methyl-D-erythritol 2-phosphate</name>
        <dbReference type="ChEBI" id="CHEBI:57919"/>
    </ligand>
</feature>
<feature type="binding site" evidence="1">
    <location>
        <begin position="307"/>
        <end position="311"/>
    </location>
    <ligand>
        <name>4-CDP-2-C-methyl-D-erythritol 2-phosphate</name>
        <dbReference type="ChEBI" id="CHEBI:57919"/>
    </ligand>
</feature>
<feature type="binding site" evidence="1">
    <location>
        <begin position="378"/>
        <end position="381"/>
    </location>
    <ligand>
        <name>4-CDP-2-C-methyl-D-erythritol 2-phosphate</name>
        <dbReference type="ChEBI" id="CHEBI:57919"/>
    </ligand>
</feature>
<feature type="binding site" evidence="1">
    <location>
        <position position="385"/>
    </location>
    <ligand>
        <name>4-CDP-2-C-methyl-D-erythritol 2-phosphate</name>
        <dbReference type="ChEBI" id="CHEBI:57919"/>
    </ligand>
</feature>
<feature type="site" description="Transition state stabilizer" evidence="1">
    <location>
        <position position="48"/>
    </location>
</feature>
<feature type="site" description="Transition state stabilizer" evidence="1">
    <location>
        <position position="55"/>
    </location>
</feature>
<feature type="site" description="Positions MEP for the nucleophilic attack" evidence="1">
    <location>
        <position position="175"/>
    </location>
</feature>
<feature type="site" description="Positions MEP for the nucleophilic attack" evidence="1">
    <location>
        <position position="227"/>
    </location>
</feature>
<feature type="site" description="Transition state stabilizer" evidence="1">
    <location>
        <position position="280"/>
    </location>
</feature>
<feature type="site" description="Transition state stabilizer" evidence="1">
    <location>
        <position position="379"/>
    </location>
</feature>
<proteinExistence type="inferred from homology"/>
<name>ISPDF_HELAH</name>
<comment type="function">
    <text evidence="1">Bifunctional enzyme that catalyzes the formation of 4-diphosphocytidyl-2-C-methyl-D-erythritol from CTP and 2-C-methyl-D-erythritol 4-phosphate (MEP) (IspD), and catalyzes the conversion of 4-diphosphocytidyl-2-C-methyl-D-erythritol 2-phosphate (CDP-ME2P) to 2-C-methyl-D-erythritol 2,4-cyclodiphosphate (ME-CPP) with a corresponding release of cytidine 5-monophosphate (CMP) (IspF).</text>
</comment>
<comment type="catalytic activity">
    <reaction evidence="1">
        <text>2-C-methyl-D-erythritol 4-phosphate + CTP + H(+) = 4-CDP-2-C-methyl-D-erythritol + diphosphate</text>
        <dbReference type="Rhea" id="RHEA:13429"/>
        <dbReference type="ChEBI" id="CHEBI:15378"/>
        <dbReference type="ChEBI" id="CHEBI:33019"/>
        <dbReference type="ChEBI" id="CHEBI:37563"/>
        <dbReference type="ChEBI" id="CHEBI:57823"/>
        <dbReference type="ChEBI" id="CHEBI:58262"/>
        <dbReference type="EC" id="2.7.7.60"/>
    </reaction>
</comment>
<comment type="catalytic activity">
    <reaction evidence="1">
        <text>4-CDP-2-C-methyl-D-erythritol 2-phosphate = 2-C-methyl-D-erythritol 2,4-cyclic diphosphate + CMP</text>
        <dbReference type="Rhea" id="RHEA:23864"/>
        <dbReference type="ChEBI" id="CHEBI:57919"/>
        <dbReference type="ChEBI" id="CHEBI:58483"/>
        <dbReference type="ChEBI" id="CHEBI:60377"/>
        <dbReference type="EC" id="4.6.1.12"/>
    </reaction>
</comment>
<comment type="cofactor">
    <cofactor evidence="1">
        <name>a divalent metal cation</name>
        <dbReference type="ChEBI" id="CHEBI:60240"/>
    </cofactor>
</comment>
<comment type="pathway">
    <text evidence="1">Isoprenoid biosynthesis; isopentenyl diphosphate biosynthesis via DXP pathway; isopentenyl diphosphate from 1-deoxy-D-xylulose 5-phosphate: step 2/6.</text>
</comment>
<comment type="pathway">
    <text evidence="1">Isoprenoid biosynthesis; isopentenyl diphosphate biosynthesis via DXP pathway; isopentenyl diphosphate from 1-deoxy-D-xylulose 5-phosphate: step 4/6.</text>
</comment>
<comment type="similarity">
    <text evidence="1">In the N-terminal section; belongs to the IspD/TarI cytidylyltransferase family. IspD subfamily.</text>
</comment>
<comment type="similarity">
    <text evidence="1">In the C-terminal section; belongs to the IspF family.</text>
</comment>
<accession>Q17WU1</accession>
<gene>
    <name evidence="1" type="primary">ispDF</name>
    <name type="ordered locus">Hac_1124</name>
</gene>
<sequence length="406" mass="45513">MSLIRVNGEAFNLSLESLKEDPFETKKTLETLIKQTSVILLAAGESRRFSQTIKKQWLRSNHTPLWLSVYESFTEALDFKEVILVVSELDYTYIKRHYPKIKLVRGGISRQESVCNALKVISGAYTLTSDVARGLANIEMLNDLFLTLQNTNHYCIAPYLPCYDTAIYYNEALDREAIKLIQTPQLSHTKTLQLALNQGDFKDESSAILQAFPDLVSYIEGSKDLHKLTTSDDLKIFTPFFNPAKDTFIGMGFDTHAFIKDKPMVLGGVVLDCEFGLKAHSDGDALLHAMIDAILGAIKGGDIGEWFPDNDPKYKNASSKELLKIVLDFSQSIGFELFEMGATIFSEIPKITPYKPAILENLSQLLGLEKSQISLKATTMEKMGFIGQQEGLLVQAHASMRYKQKL</sequence>